<reference key="1">
    <citation type="journal article" date="2010" name="Genome Biol. Evol.">
        <title>Continuing evolution of Burkholderia mallei through genome reduction and large-scale rearrangements.</title>
        <authorList>
            <person name="Losada L."/>
            <person name="Ronning C.M."/>
            <person name="DeShazer D."/>
            <person name="Woods D."/>
            <person name="Fedorova N."/>
            <person name="Kim H.S."/>
            <person name="Shabalina S.A."/>
            <person name="Pearson T.R."/>
            <person name="Brinkac L."/>
            <person name="Tan P."/>
            <person name="Nandi T."/>
            <person name="Crabtree J."/>
            <person name="Badger J."/>
            <person name="Beckstrom-Sternberg S."/>
            <person name="Saqib M."/>
            <person name="Schutzer S.E."/>
            <person name="Keim P."/>
            <person name="Nierman W.C."/>
        </authorList>
    </citation>
    <scope>NUCLEOTIDE SEQUENCE [LARGE SCALE GENOMIC DNA]</scope>
    <source>
        <strain>SAVP1</strain>
    </source>
</reference>
<keyword id="KW-0694">RNA-binding</keyword>
<keyword id="KW-0346">Stress response</keyword>
<sequence length="79" mass="8833">MSNKGQLLQDPFLNALRKEHVPVSIYLVNGIKLQGNIESFDQYVVLLRNTVTQMVYKHAISTVVPARPVNFHPDAEAAS</sequence>
<comment type="function">
    <text evidence="1">RNA chaperone that binds small regulatory RNA (sRNAs) and mRNAs to facilitate mRNA translational regulation in response to envelope stress, environmental stress and changes in metabolite concentrations. Also binds with high specificity to tRNAs.</text>
</comment>
<comment type="subunit">
    <text evidence="1">Homohexamer.</text>
</comment>
<comment type="similarity">
    <text evidence="1">Belongs to the Hfq family.</text>
</comment>
<organism>
    <name type="scientific">Burkholderia mallei (strain SAVP1)</name>
    <dbReference type="NCBI Taxonomy" id="320388"/>
    <lineage>
        <taxon>Bacteria</taxon>
        <taxon>Pseudomonadati</taxon>
        <taxon>Pseudomonadota</taxon>
        <taxon>Betaproteobacteria</taxon>
        <taxon>Burkholderiales</taxon>
        <taxon>Burkholderiaceae</taxon>
        <taxon>Burkholderia</taxon>
        <taxon>pseudomallei group</taxon>
    </lineage>
</organism>
<dbReference type="EMBL" id="CP000526">
    <property type="protein sequence ID" value="ABM50707.1"/>
    <property type="molecule type" value="Genomic_DNA"/>
</dbReference>
<dbReference type="RefSeq" id="WP_004192796.1">
    <property type="nucleotide sequence ID" value="NC_008785.1"/>
</dbReference>
<dbReference type="SMR" id="A1V4J5"/>
<dbReference type="GeneID" id="93060471"/>
<dbReference type="KEGG" id="bmv:BMASAVP1_A1829"/>
<dbReference type="HOGENOM" id="CLU_113688_2_2_4"/>
<dbReference type="GO" id="GO:0005829">
    <property type="term" value="C:cytosol"/>
    <property type="evidence" value="ECO:0007669"/>
    <property type="project" value="TreeGrafter"/>
</dbReference>
<dbReference type="GO" id="GO:0003723">
    <property type="term" value="F:RNA binding"/>
    <property type="evidence" value="ECO:0007669"/>
    <property type="project" value="UniProtKB-UniRule"/>
</dbReference>
<dbReference type="GO" id="GO:0006355">
    <property type="term" value="P:regulation of DNA-templated transcription"/>
    <property type="evidence" value="ECO:0007669"/>
    <property type="project" value="InterPro"/>
</dbReference>
<dbReference type="GO" id="GO:0043487">
    <property type="term" value="P:regulation of RNA stability"/>
    <property type="evidence" value="ECO:0007669"/>
    <property type="project" value="TreeGrafter"/>
</dbReference>
<dbReference type="GO" id="GO:0045974">
    <property type="term" value="P:regulation of translation, ncRNA-mediated"/>
    <property type="evidence" value="ECO:0007669"/>
    <property type="project" value="TreeGrafter"/>
</dbReference>
<dbReference type="CDD" id="cd01716">
    <property type="entry name" value="Hfq"/>
    <property type="match status" value="1"/>
</dbReference>
<dbReference type="FunFam" id="2.30.30.100:FF:000001">
    <property type="entry name" value="RNA-binding protein Hfq"/>
    <property type="match status" value="1"/>
</dbReference>
<dbReference type="Gene3D" id="2.30.30.100">
    <property type="match status" value="1"/>
</dbReference>
<dbReference type="HAMAP" id="MF_00436">
    <property type="entry name" value="Hfq"/>
    <property type="match status" value="1"/>
</dbReference>
<dbReference type="InterPro" id="IPR005001">
    <property type="entry name" value="Hfq"/>
</dbReference>
<dbReference type="InterPro" id="IPR010920">
    <property type="entry name" value="LSM_dom_sf"/>
</dbReference>
<dbReference type="InterPro" id="IPR047575">
    <property type="entry name" value="Sm"/>
</dbReference>
<dbReference type="NCBIfam" id="TIGR02383">
    <property type="entry name" value="Hfq"/>
    <property type="match status" value="1"/>
</dbReference>
<dbReference type="NCBIfam" id="NF001602">
    <property type="entry name" value="PRK00395.1"/>
    <property type="match status" value="1"/>
</dbReference>
<dbReference type="PANTHER" id="PTHR34772">
    <property type="entry name" value="RNA-BINDING PROTEIN HFQ"/>
    <property type="match status" value="1"/>
</dbReference>
<dbReference type="PANTHER" id="PTHR34772:SF1">
    <property type="entry name" value="RNA-BINDING PROTEIN HFQ"/>
    <property type="match status" value="1"/>
</dbReference>
<dbReference type="Pfam" id="PF17209">
    <property type="entry name" value="Hfq"/>
    <property type="match status" value="1"/>
</dbReference>
<dbReference type="SUPFAM" id="SSF50182">
    <property type="entry name" value="Sm-like ribonucleoproteins"/>
    <property type="match status" value="1"/>
</dbReference>
<dbReference type="PROSITE" id="PS52002">
    <property type="entry name" value="SM"/>
    <property type="match status" value="1"/>
</dbReference>
<proteinExistence type="inferred from homology"/>
<name>HFQ_BURMS</name>
<protein>
    <recommendedName>
        <fullName evidence="1">RNA-binding protein Hfq</fullName>
    </recommendedName>
</protein>
<accession>A1V4J5</accession>
<evidence type="ECO:0000255" key="1">
    <source>
        <dbReference type="HAMAP-Rule" id="MF_00436"/>
    </source>
</evidence>
<evidence type="ECO:0000255" key="2">
    <source>
        <dbReference type="PROSITE-ProRule" id="PRU01346"/>
    </source>
</evidence>
<feature type="chain" id="PRO_1000025896" description="RNA-binding protein Hfq">
    <location>
        <begin position="1"/>
        <end position="79"/>
    </location>
</feature>
<feature type="domain" description="Sm" evidence="2">
    <location>
        <begin position="10"/>
        <end position="69"/>
    </location>
</feature>
<gene>
    <name evidence="1" type="primary">hfq</name>
    <name type="ordered locus">BMASAVP1_A1829</name>
</gene>